<protein>
    <recommendedName>
        <fullName evidence="1">Protein-export protein SecB</fullName>
    </recommendedName>
</protein>
<comment type="function">
    <text evidence="1">One of the proteins required for the normal export of preproteins out of the cell cytoplasm. It is a molecular chaperone that binds to a subset of precursor proteins, maintaining them in a translocation-competent state. It also specifically binds to its receptor SecA.</text>
</comment>
<comment type="subunit">
    <text evidence="1">Homotetramer, a dimer of dimers. One homotetramer interacts with 1 SecA dimer.</text>
</comment>
<comment type="subcellular location">
    <subcellularLocation>
        <location evidence="1">Cytoplasm</location>
    </subcellularLocation>
</comment>
<comment type="similarity">
    <text evidence="1">Belongs to the SecB family.</text>
</comment>
<name>SECB_HAEDU</name>
<gene>
    <name evidence="1" type="primary">secB</name>
    <name type="ordered locus">HD_0661</name>
</gene>
<feature type="chain" id="PRO_0000055377" description="Protein-export protein SecB">
    <location>
        <begin position="1"/>
        <end position="172"/>
    </location>
</feature>
<reference key="1">
    <citation type="submission" date="2003-06" db="EMBL/GenBank/DDBJ databases">
        <title>The complete genome sequence of Haemophilus ducreyi.</title>
        <authorList>
            <person name="Munson R.S. Jr."/>
            <person name="Ray W.C."/>
            <person name="Mahairas G."/>
            <person name="Sabo P."/>
            <person name="Mungur R."/>
            <person name="Johnson L."/>
            <person name="Nguyen D."/>
            <person name="Wang J."/>
            <person name="Forst C."/>
            <person name="Hood L."/>
        </authorList>
    </citation>
    <scope>NUCLEOTIDE SEQUENCE [LARGE SCALE GENOMIC DNA]</scope>
    <source>
        <strain>35000HP / ATCC 700724</strain>
    </source>
</reference>
<proteinExistence type="inferred from homology"/>
<organism>
    <name type="scientific">Haemophilus ducreyi (strain 35000HP / ATCC 700724)</name>
    <dbReference type="NCBI Taxonomy" id="233412"/>
    <lineage>
        <taxon>Bacteria</taxon>
        <taxon>Pseudomonadati</taxon>
        <taxon>Pseudomonadota</taxon>
        <taxon>Gammaproteobacteria</taxon>
        <taxon>Pasteurellales</taxon>
        <taxon>Pasteurellaceae</taxon>
        <taxon>Haemophilus</taxon>
    </lineage>
</organism>
<evidence type="ECO:0000255" key="1">
    <source>
        <dbReference type="HAMAP-Rule" id="MF_00821"/>
    </source>
</evidence>
<sequence>MSEENQVAATEAEEQTPFELQIQRIYIKDVSFEAPNLPTIFHQEWKPQLGFELDTETVKLADDLYEVILHINVSTTLEDSGDTAFICEVKQAGVFTIKGLEGIQLAHCLASQCPSVLYPYARELIASLVNRGTFPALNLSPVNFDALFVDYLQRQEQEAAEAEEETPAPASN</sequence>
<keyword id="KW-0143">Chaperone</keyword>
<keyword id="KW-0963">Cytoplasm</keyword>
<keyword id="KW-0653">Protein transport</keyword>
<keyword id="KW-1185">Reference proteome</keyword>
<keyword id="KW-0811">Translocation</keyword>
<keyword id="KW-0813">Transport</keyword>
<dbReference type="EMBL" id="AE017143">
    <property type="protein sequence ID" value="AAP95586.1"/>
    <property type="molecule type" value="Genomic_DNA"/>
</dbReference>
<dbReference type="RefSeq" id="WP_010944638.1">
    <property type="nucleotide sequence ID" value="NC_002940.2"/>
</dbReference>
<dbReference type="SMR" id="Q7VN99"/>
<dbReference type="STRING" id="233412.HD_0661"/>
<dbReference type="KEGG" id="hdu:HD_0661"/>
<dbReference type="eggNOG" id="COG1952">
    <property type="taxonomic scope" value="Bacteria"/>
</dbReference>
<dbReference type="HOGENOM" id="CLU_111574_1_0_6"/>
<dbReference type="OrthoDB" id="9795145at2"/>
<dbReference type="Proteomes" id="UP000001022">
    <property type="component" value="Chromosome"/>
</dbReference>
<dbReference type="GO" id="GO:0005737">
    <property type="term" value="C:cytoplasm"/>
    <property type="evidence" value="ECO:0007669"/>
    <property type="project" value="UniProtKB-SubCell"/>
</dbReference>
<dbReference type="GO" id="GO:0051082">
    <property type="term" value="F:unfolded protein binding"/>
    <property type="evidence" value="ECO:0007669"/>
    <property type="project" value="InterPro"/>
</dbReference>
<dbReference type="GO" id="GO:0006457">
    <property type="term" value="P:protein folding"/>
    <property type="evidence" value="ECO:0007669"/>
    <property type="project" value="UniProtKB-UniRule"/>
</dbReference>
<dbReference type="GO" id="GO:0051262">
    <property type="term" value="P:protein tetramerization"/>
    <property type="evidence" value="ECO:0007669"/>
    <property type="project" value="InterPro"/>
</dbReference>
<dbReference type="GO" id="GO:0015031">
    <property type="term" value="P:protein transport"/>
    <property type="evidence" value="ECO:0007669"/>
    <property type="project" value="UniProtKB-UniRule"/>
</dbReference>
<dbReference type="CDD" id="cd00557">
    <property type="entry name" value="Translocase_SecB"/>
    <property type="match status" value="1"/>
</dbReference>
<dbReference type="Gene3D" id="3.10.420.10">
    <property type="entry name" value="SecB-like"/>
    <property type="match status" value="1"/>
</dbReference>
<dbReference type="HAMAP" id="MF_00821">
    <property type="entry name" value="SecB"/>
    <property type="match status" value="1"/>
</dbReference>
<dbReference type="InterPro" id="IPR003708">
    <property type="entry name" value="SecB"/>
</dbReference>
<dbReference type="InterPro" id="IPR035958">
    <property type="entry name" value="SecB-like_sf"/>
</dbReference>
<dbReference type="NCBIfam" id="NF004393">
    <property type="entry name" value="PRK05751.1-4"/>
    <property type="match status" value="1"/>
</dbReference>
<dbReference type="NCBIfam" id="TIGR00809">
    <property type="entry name" value="secB"/>
    <property type="match status" value="1"/>
</dbReference>
<dbReference type="PANTHER" id="PTHR36918">
    <property type="match status" value="1"/>
</dbReference>
<dbReference type="PANTHER" id="PTHR36918:SF1">
    <property type="entry name" value="PROTEIN-EXPORT PROTEIN SECB"/>
    <property type="match status" value="1"/>
</dbReference>
<dbReference type="Pfam" id="PF02556">
    <property type="entry name" value="SecB"/>
    <property type="match status" value="1"/>
</dbReference>
<dbReference type="PRINTS" id="PR01594">
    <property type="entry name" value="SECBCHAPRONE"/>
</dbReference>
<dbReference type="SUPFAM" id="SSF54611">
    <property type="entry name" value="SecB-like"/>
    <property type="match status" value="1"/>
</dbReference>
<accession>Q7VN99</accession>